<keyword id="KW-0539">Nucleus</keyword>
<keyword id="KW-1185">Reference proteome</keyword>
<keyword id="KW-0687">Ribonucleoprotein</keyword>
<keyword id="KW-0690">Ribosome biogenesis</keyword>
<keyword id="KW-0698">rRNA processing</keyword>
<name>UTP25_PARBD</name>
<protein>
    <recommendedName>
        <fullName>U3 small nucleolar RNA-associated protein 25</fullName>
        <shortName>U3 snoRNA-associated protein 25</shortName>
    </recommendedName>
    <alternativeName>
        <fullName>U three protein 25</fullName>
    </alternativeName>
</protein>
<reference key="1">
    <citation type="journal article" date="2011" name="PLoS Genet.">
        <title>Comparative genomic analysis of human fungal pathogens causing paracoccidioidomycosis.</title>
        <authorList>
            <person name="Desjardins C.A."/>
            <person name="Champion M.D."/>
            <person name="Holder J.W."/>
            <person name="Muszewska A."/>
            <person name="Goldberg J."/>
            <person name="Bailao A.M."/>
            <person name="Brigido M.M."/>
            <person name="Ferreira M.E."/>
            <person name="Garcia A.M."/>
            <person name="Grynberg M."/>
            <person name="Gujja S."/>
            <person name="Heiman D.I."/>
            <person name="Henn M.R."/>
            <person name="Kodira C.D."/>
            <person name="Leon-Narvaez H."/>
            <person name="Longo L.V.G."/>
            <person name="Ma L.-J."/>
            <person name="Malavazi I."/>
            <person name="Matsuo A.L."/>
            <person name="Morais F.V."/>
            <person name="Pereira M."/>
            <person name="Rodriguez-Brito S."/>
            <person name="Sakthikumar S."/>
            <person name="Salem-Izacc S.M."/>
            <person name="Sykes S.M."/>
            <person name="Teixeira M.M."/>
            <person name="Vallejo M.C."/>
            <person name="Walter M.E."/>
            <person name="Yandava C."/>
            <person name="Young S."/>
            <person name="Zeng Q."/>
            <person name="Zucker J."/>
            <person name="Felipe M.S."/>
            <person name="Goldman G.H."/>
            <person name="Haas B.J."/>
            <person name="McEwen J.G."/>
            <person name="Nino-Vega G."/>
            <person name="Puccia R."/>
            <person name="San-Blas G."/>
            <person name="Soares C.M."/>
            <person name="Birren B.W."/>
            <person name="Cuomo C.A."/>
        </authorList>
    </citation>
    <scope>NUCLEOTIDE SEQUENCE [LARGE SCALE GENOMIC DNA]</scope>
    <source>
        <strain>Pb18</strain>
    </source>
</reference>
<proteinExistence type="inferred from homology"/>
<comment type="function">
    <text evidence="1">DEAD-box RNA helicase-like protein required for pre-18S rRNA processing, specifically at sites A0, A1, and A2.</text>
</comment>
<comment type="subunit">
    <text evidence="1">Component of the ribosomal small subunit (SSU) processome composed of at least 40 protein subunits and snoRNA U3.</text>
</comment>
<comment type="subcellular location">
    <subcellularLocation>
        <location evidence="1">Nucleus</location>
        <location evidence="1">Nucleolus</location>
    </subcellularLocation>
</comment>
<comment type="similarity">
    <text evidence="3">Belongs to the UTP25 family.</text>
</comment>
<gene>
    <name type="primary">UTP25</name>
    <name type="ORF">PADG_02297</name>
</gene>
<accession>C1G2D1</accession>
<sequence>MAAGRGRGGSTPFNVRGGRGRGQKGGRGSRRPTFEASRVAEAHHGGSSEDGSVHSGSDLDAEDQLEAPDESSPSSSDDEEDENKTEKPYNTLLQLFNAGQDAGGPARKRRKMDHNSKKVDVEVKGSDESDAEGLLLESEGEESSEGEEMEDMEDMPMDEVRTENSGDENDASDPFEIHFSNVDSTLLSQKIEAISSKGWQSHKSELPGKLRLMASQPNTEGHTIQVLPATQGVDNLKLKQKLANHAGDHISKFDSLASSLVPYMFGYQDLLFGARTLSNSAMFRDLYCLHALNHILKTRDRVLKNNSRLQKEPESDLELRDQGFTRPKVLIILPTRQACVRVMESITKLYQPEQQENKARFHETFSAADDKLWEHKPDDFRELFGGNDDDMFRLGLKFTRKTIKYFSQFYNSDIILASPLGLRMVMDKEDGKKQDFDFLSSIEIAIVDQADALLMQNWEHTEYVFAHLNLQPKESHGCDFSRVRNWYLDDQAKYVRQTLTFSSFITPEINALFSSRMQNTAGKIKATPTYEGAILDIPLPVPVKQTFSRFNSSSPVKDPENRFKYFTSTVLSSLIRSSTGRGGTPRASGTLIFIPSYLDFVRIRNYLATSSQTEHLSFGAISEYTSVRDVARARTHFFSGRHSVLLYTERTHHFRRYHIRGVKRIIMYGVPENPVFWGEVVGFLGLDPAGTAEAAEGGVRAMFSKWDALKMERIVGTKRLGNMLTEKGGATFSFV</sequence>
<organism>
    <name type="scientific">Paracoccidioides brasiliensis (strain Pb18)</name>
    <dbReference type="NCBI Taxonomy" id="502780"/>
    <lineage>
        <taxon>Eukaryota</taxon>
        <taxon>Fungi</taxon>
        <taxon>Dikarya</taxon>
        <taxon>Ascomycota</taxon>
        <taxon>Pezizomycotina</taxon>
        <taxon>Eurotiomycetes</taxon>
        <taxon>Eurotiomycetidae</taxon>
        <taxon>Onygenales</taxon>
        <taxon>Ajellomycetaceae</taxon>
        <taxon>Paracoccidioides</taxon>
    </lineage>
</organism>
<dbReference type="EMBL" id="KN275958">
    <property type="protein sequence ID" value="EEH46147.1"/>
    <property type="molecule type" value="Genomic_DNA"/>
</dbReference>
<dbReference type="RefSeq" id="XP_010757759.1">
    <property type="nucleotide sequence ID" value="XM_010759457.1"/>
</dbReference>
<dbReference type="SMR" id="C1G2D1"/>
<dbReference type="FunCoup" id="C1G2D1">
    <property type="interactions" value="1157"/>
</dbReference>
<dbReference type="STRING" id="502780.C1G2D1"/>
<dbReference type="GeneID" id="22581803"/>
<dbReference type="KEGG" id="pbn:PADG_02297"/>
<dbReference type="VEuPathDB" id="FungiDB:PADG_02297"/>
<dbReference type="eggNOG" id="KOG2340">
    <property type="taxonomic scope" value="Eukaryota"/>
</dbReference>
<dbReference type="HOGENOM" id="CLU_018705_0_1_1"/>
<dbReference type="InParanoid" id="C1G2D1"/>
<dbReference type="OMA" id="QDRGDTF"/>
<dbReference type="OrthoDB" id="38154at33183"/>
<dbReference type="Proteomes" id="UP000001628">
    <property type="component" value="Unassembled WGS sequence"/>
</dbReference>
<dbReference type="GO" id="GO:0005730">
    <property type="term" value="C:nucleolus"/>
    <property type="evidence" value="ECO:0007669"/>
    <property type="project" value="UniProtKB-SubCell"/>
</dbReference>
<dbReference type="GO" id="GO:0032040">
    <property type="term" value="C:small-subunit processome"/>
    <property type="evidence" value="ECO:0007669"/>
    <property type="project" value="EnsemblFungi"/>
</dbReference>
<dbReference type="GO" id="GO:0019843">
    <property type="term" value="F:rRNA binding"/>
    <property type="evidence" value="ECO:0007669"/>
    <property type="project" value="EnsemblFungi"/>
</dbReference>
<dbReference type="GO" id="GO:0034511">
    <property type="term" value="F:U3 snoRNA binding"/>
    <property type="evidence" value="ECO:0007669"/>
    <property type="project" value="EnsemblFungi"/>
</dbReference>
<dbReference type="GO" id="GO:0000462">
    <property type="term" value="P:maturation of SSU-rRNA from tricistronic rRNA transcript (SSU-rRNA, 5.8S rRNA, LSU-rRNA)"/>
    <property type="evidence" value="ECO:0007669"/>
    <property type="project" value="EnsemblFungi"/>
</dbReference>
<dbReference type="FunFam" id="3.40.50.300:FF:002356">
    <property type="entry name" value="U3 small nucleolar RNA-associated protein 25"/>
    <property type="match status" value="1"/>
</dbReference>
<dbReference type="Gene3D" id="3.40.50.300">
    <property type="entry name" value="P-loop containing nucleotide triphosphate hydrolases"/>
    <property type="match status" value="1"/>
</dbReference>
<dbReference type="InterPro" id="IPR027417">
    <property type="entry name" value="P-loop_NTPase"/>
</dbReference>
<dbReference type="InterPro" id="IPR010678">
    <property type="entry name" value="UTP25"/>
</dbReference>
<dbReference type="InterPro" id="IPR053939">
    <property type="entry name" value="UTP25_C"/>
</dbReference>
<dbReference type="InterPro" id="IPR053940">
    <property type="entry name" value="UTP25_NTPase-like"/>
</dbReference>
<dbReference type="PANTHER" id="PTHR12933">
    <property type="entry name" value="ORF PROTEIN-RELATED"/>
    <property type="match status" value="1"/>
</dbReference>
<dbReference type="PANTHER" id="PTHR12933:SF0">
    <property type="entry name" value="U3 SMALL NUCLEOLAR RNA-ASSOCIATED PROTEIN 25 HOMOLOG"/>
    <property type="match status" value="1"/>
</dbReference>
<dbReference type="Pfam" id="PF06862">
    <property type="entry name" value="Utp25_C"/>
    <property type="match status" value="1"/>
</dbReference>
<dbReference type="Pfam" id="PF22916">
    <property type="entry name" value="UTP25_NTPase-like"/>
    <property type="match status" value="1"/>
</dbReference>
<feature type="chain" id="PRO_0000408127" description="U3 small nucleolar RNA-associated protein 25">
    <location>
        <begin position="1"/>
        <end position="735"/>
    </location>
</feature>
<feature type="region of interest" description="Disordered" evidence="2">
    <location>
        <begin position="1"/>
        <end position="173"/>
    </location>
</feature>
<feature type="compositionally biased region" description="Basic residues" evidence="2">
    <location>
        <begin position="18"/>
        <end position="30"/>
    </location>
</feature>
<feature type="compositionally biased region" description="Basic and acidic residues" evidence="2">
    <location>
        <begin position="38"/>
        <end position="47"/>
    </location>
</feature>
<feature type="compositionally biased region" description="Acidic residues" evidence="2">
    <location>
        <begin position="59"/>
        <end position="69"/>
    </location>
</feature>
<feature type="compositionally biased region" description="Basic and acidic residues" evidence="2">
    <location>
        <begin position="113"/>
        <end position="127"/>
    </location>
</feature>
<feature type="compositionally biased region" description="Acidic residues" evidence="2">
    <location>
        <begin position="138"/>
        <end position="157"/>
    </location>
</feature>
<evidence type="ECO:0000250" key="1"/>
<evidence type="ECO:0000256" key="2">
    <source>
        <dbReference type="SAM" id="MobiDB-lite"/>
    </source>
</evidence>
<evidence type="ECO:0000305" key="3"/>